<reference key="1">
    <citation type="journal article" date="1991" name="Mol. Microbiol.">
        <title>The IgA-binding beta antigen of the c protein complex of Group B streptococci: sequence determination of its gene and detection of two binding regions.</title>
        <authorList>
            <person name="Jerlstroem P.G."/>
            <person name="Chhatwal G.S."/>
            <person name="Timmis K.N."/>
        </authorList>
    </citation>
    <scope>NUCLEOTIDE SEQUENCE [GENOMIC DNA]</scope>
    <scope>PROTEIN SEQUENCE OF 38-48</scope>
    <source>
        <strain>LA239</strain>
    </source>
</reference>
<reference key="2">
    <citation type="journal article" date="1996" name="Protein Sci.">
        <title>Members of the immunoglobulin superfamily in bacteria.</title>
        <authorList>
            <person name="Bateman A."/>
            <person name="Eddy S.R."/>
            <person name="Chothia C."/>
        </authorList>
    </citation>
    <scope>IDENTIFICATION OF IG-LIKE DOMAIN</scope>
</reference>
<protein>
    <recommendedName>
        <fullName>IgA FC receptor</fullName>
    </recommendedName>
    <alternativeName>
        <fullName>Beta antigen</fullName>
        <shortName>B antigen</shortName>
    </alternativeName>
</protein>
<gene>
    <name type="primary">bag</name>
</gene>
<feature type="signal peptide" evidence="4">
    <location>
        <begin position="1"/>
        <end position="37"/>
    </location>
</feature>
<feature type="chain" id="PRO_0000005595" description="IgA FC receptor">
    <location>
        <begin position="38"/>
        <end position="1135"/>
    </location>
</feature>
<feature type="propeptide" id="PRO_0000005596" description="Removed by sortase" evidence="2">
    <location>
        <begin position="1136"/>
        <end position="1164"/>
    </location>
</feature>
<feature type="domain" description="Ig-like">
    <location>
        <begin position="434"/>
        <end position="534"/>
    </location>
</feature>
<feature type="region of interest" description="Disordered" evidence="3">
    <location>
        <begin position="54"/>
        <end position="75"/>
    </location>
</feature>
<feature type="region of interest" description="Disordered" evidence="3">
    <location>
        <begin position="167"/>
        <end position="220"/>
    </location>
</feature>
<feature type="region of interest" description="IgA-binding" evidence="1">
    <location>
        <begin position="199"/>
        <end position="438"/>
    </location>
</feature>
<feature type="region of interest" description="IgA-binding" evidence="1">
    <location>
        <begin position="439"/>
        <end position="826"/>
    </location>
</feature>
<feature type="region of interest" description="Disordered" evidence="3">
    <location>
        <begin position="536"/>
        <end position="567"/>
    </location>
</feature>
<feature type="region of interest" description="Disordered" evidence="3">
    <location>
        <begin position="823"/>
        <end position="947"/>
    </location>
</feature>
<feature type="short sequence motif" description="LPXTG sorting signal" evidence="2">
    <location>
        <begin position="1132"/>
        <end position="1136"/>
    </location>
</feature>
<feature type="compositionally biased region" description="Polar residues" evidence="3">
    <location>
        <begin position="59"/>
        <end position="73"/>
    </location>
</feature>
<feature type="compositionally biased region" description="Basic and acidic residues" evidence="3">
    <location>
        <begin position="167"/>
        <end position="176"/>
    </location>
</feature>
<feature type="compositionally biased region" description="Basic and acidic residues" evidence="3">
    <location>
        <begin position="183"/>
        <end position="220"/>
    </location>
</feature>
<feature type="compositionally biased region" description="Basic and acidic residues" evidence="3">
    <location>
        <begin position="536"/>
        <end position="564"/>
    </location>
</feature>
<feature type="compositionally biased region" description="Pro residues" evidence="3">
    <location>
        <begin position="911"/>
        <end position="920"/>
    </location>
</feature>
<feature type="modified residue" description="Pentaglycyl murein peptidoglycan amidated threonine" evidence="2">
    <location>
        <position position="1135"/>
    </location>
</feature>
<feature type="helix" evidence="5">
    <location>
        <begin position="105"/>
        <end position="124"/>
    </location>
</feature>
<feature type="helix" evidence="5">
    <location>
        <begin position="129"/>
        <end position="141"/>
    </location>
</feature>
<feature type="helix" evidence="5">
    <location>
        <begin position="145"/>
        <end position="174"/>
    </location>
</feature>
<feature type="strand" evidence="6">
    <location>
        <begin position="437"/>
        <end position="440"/>
    </location>
</feature>
<feature type="strand" evidence="6">
    <location>
        <begin position="453"/>
        <end position="460"/>
    </location>
</feature>
<feature type="strand" evidence="6">
    <location>
        <begin position="466"/>
        <end position="468"/>
    </location>
</feature>
<feature type="helix" evidence="6">
    <location>
        <begin position="470"/>
        <end position="476"/>
    </location>
</feature>
<feature type="strand" evidence="6">
    <location>
        <begin position="484"/>
        <end position="486"/>
    </location>
</feature>
<feature type="strand" evidence="6">
    <location>
        <begin position="493"/>
        <end position="502"/>
    </location>
</feature>
<feature type="strand" evidence="6">
    <location>
        <begin position="511"/>
        <end position="518"/>
    </location>
</feature>
<feature type="strand" evidence="6">
    <location>
        <begin position="523"/>
        <end position="531"/>
    </location>
</feature>
<feature type="helix" evidence="7">
    <location>
        <begin position="737"/>
        <end position="758"/>
    </location>
</feature>
<feature type="helix" evidence="7">
    <location>
        <begin position="775"/>
        <end position="792"/>
    </location>
</feature>
<feature type="helix" evidence="7">
    <location>
        <begin position="797"/>
        <end position="821"/>
    </location>
</feature>
<name>BAG_STRAG</name>
<comment type="subcellular location">
    <subcellularLocation>
        <location evidence="2">Secreted</location>
        <location evidence="2">Cell wall</location>
        <topology evidence="2">Peptidoglycan-anchor</topology>
    </subcellularLocation>
</comment>
<evidence type="ECO:0000255" key="1"/>
<evidence type="ECO:0000255" key="2">
    <source>
        <dbReference type="PROSITE-ProRule" id="PRU00477"/>
    </source>
</evidence>
<evidence type="ECO:0000256" key="3">
    <source>
        <dbReference type="SAM" id="MobiDB-lite"/>
    </source>
</evidence>
<evidence type="ECO:0000269" key="4">
    <source>
    </source>
</evidence>
<evidence type="ECO:0007829" key="5">
    <source>
        <dbReference type="PDB" id="5WAH"/>
    </source>
</evidence>
<evidence type="ECO:0007829" key="6">
    <source>
        <dbReference type="PDB" id="6V3P"/>
    </source>
</evidence>
<evidence type="ECO:0007829" key="7">
    <source>
        <dbReference type="PDB" id="7S0R"/>
    </source>
</evidence>
<dbReference type="EMBL" id="X59771">
    <property type="protein sequence ID" value="CAA42442.1"/>
    <property type="molecule type" value="Genomic_DNA"/>
</dbReference>
<dbReference type="PIR" id="S15330">
    <property type="entry name" value="FCSOAG"/>
</dbReference>
<dbReference type="PDB" id="5WAH">
    <property type="method" value="NMR"/>
    <property type="chains" value="A=92-189"/>
</dbReference>
<dbReference type="PDB" id="6V3P">
    <property type="method" value="X-ray"/>
    <property type="resolution" value="3.25 A"/>
    <property type="chains" value="C/D=428-540"/>
</dbReference>
<dbReference type="PDB" id="7S0R">
    <property type="method" value="X-ray"/>
    <property type="resolution" value="2.50 A"/>
    <property type="chains" value="A/B=725-826"/>
</dbReference>
<dbReference type="PDBsum" id="5WAH"/>
<dbReference type="PDBsum" id="6V3P"/>
<dbReference type="PDBsum" id="7S0R"/>
<dbReference type="BMRB" id="P27951"/>
<dbReference type="SMR" id="P27951"/>
<dbReference type="GO" id="GO:0005576">
    <property type="term" value="C:extracellular region"/>
    <property type="evidence" value="ECO:0007669"/>
    <property type="project" value="UniProtKB-KW"/>
</dbReference>
<dbReference type="Gene3D" id="1.20.140.130">
    <property type="match status" value="1"/>
</dbReference>
<dbReference type="Gene3D" id="1.20.81.20">
    <property type="match status" value="2"/>
</dbReference>
<dbReference type="Gene3D" id="2.60.40.10">
    <property type="entry name" value="Immunoglobulins"/>
    <property type="match status" value="1"/>
</dbReference>
<dbReference type="InterPro" id="IPR031792">
    <property type="entry name" value="GAG_BD"/>
</dbReference>
<dbReference type="InterPro" id="IPR038349">
    <property type="entry name" value="GAG_BD_sf"/>
</dbReference>
<dbReference type="InterPro" id="IPR036179">
    <property type="entry name" value="Ig-like_dom_sf"/>
</dbReference>
<dbReference type="InterPro" id="IPR013783">
    <property type="entry name" value="Ig-like_fold"/>
</dbReference>
<dbReference type="InterPro" id="IPR003599">
    <property type="entry name" value="Ig_sub"/>
</dbReference>
<dbReference type="InterPro" id="IPR019931">
    <property type="entry name" value="LPXTG_anchor"/>
</dbReference>
<dbReference type="InterPro" id="IPR007756">
    <property type="entry name" value="RICH"/>
</dbReference>
<dbReference type="InterPro" id="IPR038183">
    <property type="entry name" value="RICH_sf"/>
</dbReference>
<dbReference type="InterPro" id="IPR005877">
    <property type="entry name" value="YSIRK_signal_dom"/>
</dbReference>
<dbReference type="NCBIfam" id="NF038253">
    <property type="entry name" value="GBS_IgA_bnd_BAC"/>
    <property type="match status" value="1"/>
</dbReference>
<dbReference type="NCBIfam" id="TIGR01167">
    <property type="entry name" value="LPXTG_anchor"/>
    <property type="match status" value="1"/>
</dbReference>
<dbReference type="NCBIfam" id="TIGR01168">
    <property type="entry name" value="YSIRK_signal"/>
    <property type="match status" value="1"/>
</dbReference>
<dbReference type="Pfam" id="PF16828">
    <property type="entry name" value="GAGBD"/>
    <property type="match status" value="1"/>
</dbReference>
<dbReference type="Pfam" id="PF00746">
    <property type="entry name" value="Gram_pos_anchor"/>
    <property type="match status" value="1"/>
</dbReference>
<dbReference type="Pfam" id="PF05062">
    <property type="entry name" value="RICH"/>
    <property type="match status" value="1"/>
</dbReference>
<dbReference type="Pfam" id="PF04650">
    <property type="entry name" value="YSIRK_signal"/>
    <property type="match status" value="1"/>
</dbReference>
<dbReference type="SMART" id="SM00409">
    <property type="entry name" value="IG"/>
    <property type="match status" value="1"/>
</dbReference>
<dbReference type="SUPFAM" id="SSF48726">
    <property type="entry name" value="Immunoglobulin"/>
    <property type="match status" value="1"/>
</dbReference>
<dbReference type="PROSITE" id="PS50847">
    <property type="entry name" value="GRAM_POS_ANCHORING"/>
    <property type="match status" value="1"/>
</dbReference>
<proteinExistence type="evidence at protein level"/>
<accession>P27951</accession>
<sequence>MFKSNYERKMRYSIRKFSVGVASVAVASLFMGSVAHASELVKDDSVKTTEVAAKPYPSMAQTDQGNNSSSSELETTKMEIPTTDIKKAVEPVEKTAGETSATDTGKREKQLQQWKNNLKNDVDNTILSHEQKNEFKTKIDETNDSDALLELENQFNETNRLLHIKQHEEVEKDKKAKQQKTLKQSDTKVDLSNIDKELNHQKSQVEKMAEQKGITNEDKDSMLKKIEDIRKQAQQADKKEDAEVKVREELGKLFSSTKAGLDQEIQEHVKKETSSEENTQKVDEHYANSLQNLAQKSLEELDKATTNEQATQVKNQFLENAQKLKEIQPLIKETNVKLYKAMSESLEQVEKELKHNSEANLEDLVAKSKEIVREYEGKLNQSKNLPELKQLEEEAHSKLKQVVEDFRKKFKTSEQVTPKKRVKRDLAANENNQQKIELTVSPENITVYEGEDVKFTVTAKSDSKTTLDFSDLLTKYNPSVSDRISTNYKTNTDNHKIAEITIKNLKLNESQTVTLKAKDDSGNVVEKTFTITVQKKEEKQVPKTPEQKDSKTEEKVPQEPKSNDKNQLQELIKSAQQELEKLEKAIKELMEQPEIPSNPEYGIQKSIWESQKEPIQEAITSFKKIIGDSSSKYYTEHYFNKYKSDFMNYQLHAQMEMLTRKVVQYMNKYPDNAEIKKIFESDMKRTKEDNYGSLENDALKGYFEKYFLTPFNKIKQIVDDLDKKVEQDQPAPIPENSEMDQAKEKAKIAVSKYMSKVLDGVHQHLQKKNNSKIVDLFKELEAIKQQTIFDIDNAKTEVEIDNLVHDAFSKMNATVAKFQKGLETNTPETPDTPKIPELPQAPDTPQAPDTPHVPESPKAPEAPRVPESPKTPEAPHVPESPKAPEAPRVPESPKTPEAPHVPESPKTPEAPKIPEPPKTPDVPKLPDVPKLPDVPKLPDAPKLPDGLNKVGQAVFTSTDGNTKVTVVFDKPTDADKLHLKEVTTKELADKIAHKTGGGTVRVFDLSLSKGGKETHVNGERTVRLALGQTGSDVHVYHVKENGDLERIPSKVENGQVVFKTNHFSLFAIKTLSKDQNVTPPKQTKPSTQGSQVEIAESQTGKFQSKAANHKALATGNETVAKGNPTSTTEKKLPYTGVASNLVLEIMGLLGLIGTSFIAMKRRKS</sequence>
<keyword id="KW-0002">3D-structure</keyword>
<keyword id="KW-0134">Cell wall</keyword>
<keyword id="KW-0903">Direct protein sequencing</keyword>
<keyword id="KW-0393">Immunoglobulin domain</keyword>
<keyword id="KW-0572">Peptidoglycan-anchor</keyword>
<keyword id="KW-0675">Receptor</keyword>
<keyword id="KW-0964">Secreted</keyword>
<keyword id="KW-0732">Signal</keyword>
<organism>
    <name type="scientific">Streptococcus agalactiae</name>
    <dbReference type="NCBI Taxonomy" id="1311"/>
    <lineage>
        <taxon>Bacteria</taxon>
        <taxon>Bacillati</taxon>
        <taxon>Bacillota</taxon>
        <taxon>Bacilli</taxon>
        <taxon>Lactobacillales</taxon>
        <taxon>Streptococcaceae</taxon>
        <taxon>Streptococcus</taxon>
    </lineage>
</organism>